<accession>Q8M9H0</accession>
<organism>
    <name type="scientific">Jacaranda mimosifolia</name>
    <name type="common">Jacaranda</name>
    <dbReference type="NCBI Taxonomy" id="185774"/>
    <lineage>
        <taxon>Eukaryota</taxon>
        <taxon>Viridiplantae</taxon>
        <taxon>Streptophyta</taxon>
        <taxon>Embryophyta</taxon>
        <taxon>Tracheophyta</taxon>
        <taxon>Spermatophyta</taxon>
        <taxon>Magnoliopsida</taxon>
        <taxon>eudicotyledons</taxon>
        <taxon>Gunneridae</taxon>
        <taxon>Pentapetalae</taxon>
        <taxon>asterids</taxon>
        <taxon>lamiids</taxon>
        <taxon>Lamiales</taxon>
        <taxon>Bignoniaceae</taxon>
        <taxon>Jacarandeae</taxon>
        <taxon>Jacaranda</taxon>
    </lineage>
</organism>
<geneLocation type="chloroplast"/>
<reference key="1">
    <citation type="journal article" date="2002" name="Mol. Phylogenet. Evol.">
        <title>Phylogenetics of asterids based on 3 coding and 3 non-coding chloroplast DNA markers and the utility of non-coding DNA at higher taxonomic levels.</title>
        <authorList>
            <person name="Bremer B."/>
            <person name="Bremer K."/>
            <person name="Heidari N."/>
            <person name="Erixon P."/>
            <person name="Olmstead R.G."/>
            <person name="Anderberg A.A."/>
            <person name="Kallersjo M."/>
            <person name="Barkhordarian E."/>
        </authorList>
    </citation>
    <scope>NUCLEOTIDE SEQUENCE [GENOMIC DNA]</scope>
</reference>
<dbReference type="EMBL" id="AJ429328">
    <property type="protein sequence ID" value="CAD22224.1"/>
    <property type="molecule type" value="Genomic_DNA"/>
</dbReference>
<dbReference type="RefSeq" id="YP_010145082.1">
    <property type="nucleotide sequence ID" value="NC_056995.1"/>
</dbReference>
<dbReference type="GeneID" id="67141701"/>
<dbReference type="GO" id="GO:0009507">
    <property type="term" value="C:chloroplast"/>
    <property type="evidence" value="ECO:0007669"/>
    <property type="project" value="UniProtKB-SubCell"/>
</dbReference>
<dbReference type="GO" id="GO:0003723">
    <property type="term" value="F:RNA binding"/>
    <property type="evidence" value="ECO:0007669"/>
    <property type="project" value="UniProtKB-KW"/>
</dbReference>
<dbReference type="GO" id="GO:0006397">
    <property type="term" value="P:mRNA processing"/>
    <property type="evidence" value="ECO:0007669"/>
    <property type="project" value="UniProtKB-KW"/>
</dbReference>
<dbReference type="GO" id="GO:0008380">
    <property type="term" value="P:RNA splicing"/>
    <property type="evidence" value="ECO:0007669"/>
    <property type="project" value="UniProtKB-UniRule"/>
</dbReference>
<dbReference type="GO" id="GO:0008033">
    <property type="term" value="P:tRNA processing"/>
    <property type="evidence" value="ECO:0007669"/>
    <property type="project" value="UniProtKB-KW"/>
</dbReference>
<dbReference type="HAMAP" id="MF_01390">
    <property type="entry name" value="MatK"/>
    <property type="match status" value="1"/>
</dbReference>
<dbReference type="InterPro" id="IPR024937">
    <property type="entry name" value="Domain_X"/>
</dbReference>
<dbReference type="InterPro" id="IPR002866">
    <property type="entry name" value="Maturase_MatK"/>
</dbReference>
<dbReference type="InterPro" id="IPR024942">
    <property type="entry name" value="Maturase_MatK_N"/>
</dbReference>
<dbReference type="PANTHER" id="PTHR34811">
    <property type="entry name" value="MATURASE K"/>
    <property type="match status" value="1"/>
</dbReference>
<dbReference type="PANTHER" id="PTHR34811:SF1">
    <property type="entry name" value="MATURASE K"/>
    <property type="match status" value="1"/>
</dbReference>
<dbReference type="Pfam" id="PF01348">
    <property type="entry name" value="Intron_maturas2"/>
    <property type="match status" value="1"/>
</dbReference>
<dbReference type="Pfam" id="PF01824">
    <property type="entry name" value="MatK_N"/>
    <property type="match status" value="1"/>
</dbReference>
<feature type="chain" id="PRO_0000143441" description="Maturase K">
    <location>
        <begin position="1"/>
        <end position="509"/>
    </location>
</feature>
<proteinExistence type="inferred from homology"/>
<keyword id="KW-0150">Chloroplast</keyword>
<keyword id="KW-0507">mRNA processing</keyword>
<keyword id="KW-0934">Plastid</keyword>
<keyword id="KW-0694">RNA-binding</keyword>
<keyword id="KW-0819">tRNA processing</keyword>
<protein>
    <recommendedName>
        <fullName evidence="1">Maturase K</fullName>
    </recommendedName>
    <alternativeName>
        <fullName evidence="1">Intron maturase</fullName>
    </alternativeName>
</protein>
<evidence type="ECO:0000255" key="1">
    <source>
        <dbReference type="HAMAP-Rule" id="MF_01390"/>
    </source>
</evidence>
<name>MATK_JACMI</name>
<gene>
    <name evidence="1" type="primary">matK</name>
</gene>
<sequence length="509" mass="59838">MEEIQRYLQPERSQQHDFLYPLIFQEYIYAFAYDRGFSRSILSENPGYDNKSSLLIVKRLITGMYQQNHFLISPNDSNQNPFGARNKNLYFPIISEGFAFIVEIPFSLRLISCLEGKKIVKSQNLRSIHSIFPFLEDNFSHLNFVLDILIPQPVHVEILVQTLHYWVKDASSLHLLRFFLNEYCNWNSLITPNKASSSFSKRNQRLFLFLYNSHVYEYESIFVFLRNQSSHLRSTSSGVLLERIFFYGKIERLVNVFVKVKDFQANLWLVKEPCMHYIRYQRKSILASKGTALFMNKWKCYLVTFWQWHFSLWFHPRRISINQLSNHSLEFLGYLSSVRMNASVVRSQIIENSFLINNAIKKFDTFVPIIPLIASLAKAKFCNVLGHPISKPVRADLSDSNIIDRFGRICRNLSHYHSGSSKKKSLYRIKYILRLSCARTLARKHKSTVRAFLKRLGSELLEEFLMSEEDVLFLTFPKASSTLRGVYRSRIWYLDIISINDLANHKSKF</sequence>
<comment type="function">
    <text evidence="1">Usually encoded in the trnK tRNA gene intron. Probably assists in splicing its own and other chloroplast group II introns.</text>
</comment>
<comment type="subcellular location">
    <subcellularLocation>
        <location>Plastid</location>
        <location>Chloroplast</location>
    </subcellularLocation>
</comment>
<comment type="similarity">
    <text evidence="1">Belongs to the intron maturase 2 family. MatK subfamily.</text>
</comment>